<dbReference type="EC" id="1.15.1.1"/>
<dbReference type="EMBL" id="M63815">
    <property type="status" value="NOT_ANNOTATED_CDS"/>
    <property type="molecule type" value="mRNA"/>
</dbReference>
<dbReference type="EMBL" id="M63816">
    <property type="status" value="NOT_ANNOTATED_CDS"/>
    <property type="molecule type" value="mRNA"/>
</dbReference>
<dbReference type="EMBL" id="X70852">
    <property type="protein sequence ID" value="CAA50204.1"/>
    <property type="molecule type" value="Genomic_DNA"/>
</dbReference>
<dbReference type="EMBL" id="DS571167">
    <property type="status" value="NOT_ANNOTATED_CDS"/>
    <property type="molecule type" value="Genomic_DNA"/>
</dbReference>
<dbReference type="PIR" id="A45552">
    <property type="entry name" value="A45552"/>
</dbReference>
<dbReference type="RefSeq" id="XP_648827.1">
    <property type="nucleotide sequence ID" value="XM_643735.2"/>
</dbReference>
<dbReference type="SMR" id="P34107"/>
<dbReference type="FunCoup" id="P34107">
    <property type="interactions" value="302"/>
</dbReference>
<dbReference type="STRING" id="5759.P34107"/>
<dbReference type="KEGG" id="ehi:EHI_159160"/>
<dbReference type="VEuPathDB" id="AmoebaDB:EHI5A_272690"/>
<dbReference type="VEuPathDB" id="AmoebaDB:EHI_159160"/>
<dbReference type="VEuPathDB" id="AmoebaDB:KM1_324680"/>
<dbReference type="eggNOG" id="KOG0876">
    <property type="taxonomic scope" value="Eukaryota"/>
</dbReference>
<dbReference type="InParanoid" id="P34107"/>
<dbReference type="OMA" id="DSLINWD"/>
<dbReference type="OrthoDB" id="239262at2759"/>
<dbReference type="Proteomes" id="UP000001926">
    <property type="component" value="Partially assembled WGS sequence"/>
</dbReference>
<dbReference type="GO" id="GO:0046872">
    <property type="term" value="F:metal ion binding"/>
    <property type="evidence" value="ECO:0007669"/>
    <property type="project" value="UniProtKB-KW"/>
</dbReference>
<dbReference type="GO" id="GO:0004784">
    <property type="term" value="F:superoxide dismutase activity"/>
    <property type="evidence" value="ECO:0007669"/>
    <property type="project" value="UniProtKB-EC"/>
</dbReference>
<dbReference type="FunFam" id="1.10.287.990:FF:000002">
    <property type="entry name" value="Superoxide dismutase"/>
    <property type="match status" value="1"/>
</dbReference>
<dbReference type="Gene3D" id="1.10.287.990">
    <property type="entry name" value="Fe,Mn superoxide dismutase (SOD) domain"/>
    <property type="match status" value="1"/>
</dbReference>
<dbReference type="Gene3D" id="3.55.40.20">
    <property type="entry name" value="Iron/manganese superoxide dismutase, C-terminal domain"/>
    <property type="match status" value="1"/>
</dbReference>
<dbReference type="InterPro" id="IPR001189">
    <property type="entry name" value="Mn/Fe_SOD"/>
</dbReference>
<dbReference type="InterPro" id="IPR019833">
    <property type="entry name" value="Mn/Fe_SOD_BS"/>
</dbReference>
<dbReference type="InterPro" id="IPR019832">
    <property type="entry name" value="Mn/Fe_SOD_C"/>
</dbReference>
<dbReference type="InterPro" id="IPR019831">
    <property type="entry name" value="Mn/Fe_SOD_N"/>
</dbReference>
<dbReference type="InterPro" id="IPR036324">
    <property type="entry name" value="Mn/Fe_SOD_N_sf"/>
</dbReference>
<dbReference type="InterPro" id="IPR036314">
    <property type="entry name" value="SOD_C_sf"/>
</dbReference>
<dbReference type="PANTHER" id="PTHR42769">
    <property type="entry name" value="SUPEROXIDE DISMUTASE"/>
    <property type="match status" value="1"/>
</dbReference>
<dbReference type="PANTHER" id="PTHR42769:SF3">
    <property type="entry name" value="SUPEROXIDE DISMUTASE [FE] 2, CHLOROPLASTIC"/>
    <property type="match status" value="1"/>
</dbReference>
<dbReference type="Pfam" id="PF02777">
    <property type="entry name" value="Sod_Fe_C"/>
    <property type="match status" value="1"/>
</dbReference>
<dbReference type="Pfam" id="PF00081">
    <property type="entry name" value="Sod_Fe_N"/>
    <property type="match status" value="1"/>
</dbReference>
<dbReference type="PIRSF" id="PIRSF000349">
    <property type="entry name" value="SODismutase"/>
    <property type="match status" value="1"/>
</dbReference>
<dbReference type="PRINTS" id="PR01703">
    <property type="entry name" value="MNSODISMTASE"/>
</dbReference>
<dbReference type="SUPFAM" id="SSF54719">
    <property type="entry name" value="Fe,Mn superoxide dismutase (SOD), C-terminal domain"/>
    <property type="match status" value="1"/>
</dbReference>
<dbReference type="SUPFAM" id="SSF46609">
    <property type="entry name" value="Fe,Mn superoxide dismutase (SOD), N-terminal domain"/>
    <property type="match status" value="1"/>
</dbReference>
<dbReference type="PROSITE" id="PS00088">
    <property type="entry name" value="SOD_MN"/>
    <property type="match status" value="1"/>
</dbReference>
<reference key="1">
    <citation type="journal article" date="1991" name="Mol. Biochem. Parasitol.">
        <title>Pathogenic and nonpathogenic Entamoeba histolytica: identification and molecular cloning of an iron-containing superoxide dismutase.</title>
        <authorList>
            <person name="Tannich E."/>
            <person name="Bruchhaus I."/>
            <person name="Walter R.D."/>
            <person name="Horstmann R.D."/>
        </authorList>
    </citation>
    <scope>NUCLEOTIDE SEQUENCE [MRNA]</scope>
    <source>
        <strain>ATCC 30459 / HM-1:IMSS / ABRM</strain>
        <strain>SAW 142</strain>
    </source>
</reference>
<reference key="2">
    <citation type="journal article" date="1993" name="DNA Cell Biol.">
        <title>Unusual gene organization in the protozoan parasite Entamoeba histolytica.</title>
        <authorList>
            <person name="Bruchhaus I."/>
            <person name="Leippe M."/>
            <person name="Lioutas C."/>
            <person name="Tannich E."/>
        </authorList>
    </citation>
    <scope>NUCLEOTIDE SEQUENCE [GENOMIC DNA]</scope>
</reference>
<reference key="3">
    <citation type="journal article" date="2005" name="Nature">
        <title>The genome of the protist parasite Entamoeba histolytica.</title>
        <authorList>
            <person name="Loftus B.J."/>
            <person name="Anderson I."/>
            <person name="Davies R."/>
            <person name="Alsmark U.C."/>
            <person name="Samuelson J."/>
            <person name="Amedeo P."/>
            <person name="Roncaglia P."/>
            <person name="Berriman M."/>
            <person name="Hirt R.P."/>
            <person name="Mann B.J."/>
            <person name="Nozaki T."/>
            <person name="Suh B."/>
            <person name="Pop M."/>
            <person name="Duchene M."/>
            <person name="Ackers J."/>
            <person name="Tannich E."/>
            <person name="Leippe M."/>
            <person name="Hofer M."/>
            <person name="Bruchhaus I."/>
            <person name="Willhoeft U."/>
            <person name="Bhattacharya A."/>
            <person name="Chillingworth T."/>
            <person name="Churcher C.M."/>
            <person name="Hance Z."/>
            <person name="Harris B."/>
            <person name="Harris D."/>
            <person name="Jagels K."/>
            <person name="Moule S."/>
            <person name="Mungall K.L."/>
            <person name="Ormond D."/>
            <person name="Squares R."/>
            <person name="Whitehead S."/>
            <person name="Quail M.A."/>
            <person name="Rabbinowitsch E."/>
            <person name="Norbertczak H."/>
            <person name="Price C."/>
            <person name="Wang Z."/>
            <person name="Guillen N."/>
            <person name="Gilchrist C."/>
            <person name="Stroup S.E."/>
            <person name="Bhattacharya S."/>
            <person name="Lohia A."/>
            <person name="Foster P.G."/>
            <person name="Sicheritz-Ponten T."/>
            <person name="Weber C."/>
            <person name="Singh U."/>
            <person name="Mukherjee C."/>
            <person name="El-Sayed N.M.A."/>
            <person name="Petri W.A."/>
            <person name="Clark C.G."/>
            <person name="Embley T.M."/>
            <person name="Barrell B.G."/>
            <person name="Fraser C.M."/>
            <person name="Hall N."/>
        </authorList>
    </citation>
    <scope>NUCLEOTIDE SEQUENCE [LARGE SCALE GENOMIC DNA]</scope>
    <source>
        <strain>ATCC 30459 / HM-1:IMSS / ABRM</strain>
    </source>
</reference>
<reference key="4">
    <citation type="journal article" date="2010" name="PLoS Negl. Trop. Dis.">
        <title>New assembly, reannotation and analysis of the Entamoeba histolytica genome reveal new genomic features and protein content information.</title>
        <authorList>
            <person name="Lorenzi H.A."/>
            <person name="Puiu D."/>
            <person name="Miller J.R."/>
            <person name="Brinkac L.M."/>
            <person name="Amedeo P."/>
            <person name="Hall N."/>
            <person name="Caler E.V."/>
        </authorList>
    </citation>
    <scope>GENOME REANNOTATION</scope>
    <source>
        <strain>ATCC 30459 / HM-1:IMSS / ABRM</strain>
    </source>
</reference>
<organism>
    <name type="scientific">Entamoeba histolytica (strain ATCC 30459 / HM-1:IMSS / ABRM)</name>
    <dbReference type="NCBI Taxonomy" id="294381"/>
    <lineage>
        <taxon>Eukaryota</taxon>
        <taxon>Amoebozoa</taxon>
        <taxon>Evosea</taxon>
        <taxon>Archamoebae</taxon>
        <taxon>Mastigamoebida</taxon>
        <taxon>Entamoebidae</taxon>
        <taxon>Entamoeba</taxon>
    </lineage>
</organism>
<sequence>MSFQLPQLPYAYNALEPHISKETLEFHHDKHHATYVNKLNGLVKGTEQEHKTLEELIKQKPTQAIYNNAAQAWNHAFYWKCMCGCGVKPSEQLIAKLTAAFGGLEEFKKKFTEKAVGHFGSGWCWLVEHDGKLEIIDTHDAVNPMTNGMKPLLTCDVWEHAYYIDTRNNRAAYLEHWWNVVNWKFVEEQL</sequence>
<gene>
    <name type="primary">SODB</name>
</gene>
<feature type="chain" id="PRO_0000159965" description="Superoxide dismutase [Fe]">
    <location>
        <begin position="1"/>
        <end position="190"/>
    </location>
</feature>
<feature type="binding site" evidence="1">
    <location>
        <position position="27"/>
    </location>
    <ligand>
        <name>Fe cation</name>
        <dbReference type="ChEBI" id="CHEBI:24875"/>
    </ligand>
</feature>
<feature type="binding site" evidence="1">
    <location>
        <position position="75"/>
    </location>
    <ligand>
        <name>Fe cation</name>
        <dbReference type="ChEBI" id="CHEBI:24875"/>
    </ligand>
</feature>
<feature type="binding site" evidence="1">
    <location>
        <position position="156"/>
    </location>
    <ligand>
        <name>Fe cation</name>
        <dbReference type="ChEBI" id="CHEBI:24875"/>
    </ligand>
</feature>
<feature type="binding site" evidence="1">
    <location>
        <position position="160"/>
    </location>
    <ligand>
        <name>Fe cation</name>
        <dbReference type="ChEBI" id="CHEBI:24875"/>
    </ligand>
</feature>
<feature type="sequence variant" description="In strain: SAW 142.">
    <original>I</original>
    <variation>T</variation>
    <location>
        <position position="94"/>
    </location>
</feature>
<feature type="sequence variant" description="In strain: SAW 142.">
    <original>V</original>
    <variation>I</variation>
    <location>
        <position position="142"/>
    </location>
</feature>
<accession>P34107</accession>
<keyword id="KW-0408">Iron</keyword>
<keyword id="KW-0479">Metal-binding</keyword>
<keyword id="KW-0560">Oxidoreductase</keyword>
<keyword id="KW-1185">Reference proteome</keyword>
<comment type="function">
    <text>Destroys superoxide anion radicals which are normally produced within the cells and which are toxic to biological systems.</text>
</comment>
<comment type="catalytic activity">
    <reaction>
        <text>2 superoxide + 2 H(+) = H2O2 + O2</text>
        <dbReference type="Rhea" id="RHEA:20696"/>
        <dbReference type="ChEBI" id="CHEBI:15378"/>
        <dbReference type="ChEBI" id="CHEBI:15379"/>
        <dbReference type="ChEBI" id="CHEBI:16240"/>
        <dbReference type="ChEBI" id="CHEBI:18421"/>
        <dbReference type="EC" id="1.15.1.1"/>
    </reaction>
</comment>
<comment type="cofactor">
    <cofactor evidence="1">
        <name>Fe cation</name>
        <dbReference type="ChEBI" id="CHEBI:24875"/>
    </cofactor>
    <text evidence="1">Binds 1 Fe cation per subunit.</text>
</comment>
<comment type="subunit">
    <text evidence="2">Homodimer.</text>
</comment>
<comment type="similarity">
    <text evidence="2">Belongs to the iron/manganese superoxide dismutase family.</text>
</comment>
<proteinExistence type="evidence at transcript level"/>
<evidence type="ECO:0000250" key="1"/>
<evidence type="ECO:0000305" key="2"/>
<name>SODF_ENTH1</name>
<protein>
    <recommendedName>
        <fullName>Superoxide dismutase [Fe]</fullName>
        <ecNumber>1.15.1.1</ecNumber>
    </recommendedName>
</protein>